<protein>
    <recommendedName>
        <fullName>Protein FAM234A</fullName>
    </recommendedName>
    <alternativeName>
        <fullName>Protein ITFG3</fullName>
    </alternativeName>
</protein>
<evidence type="ECO:0000250" key="1">
    <source>
        <dbReference type="UniProtKB" id="Q5M7W6"/>
    </source>
</evidence>
<evidence type="ECO:0000255" key="2"/>
<evidence type="ECO:0000256" key="3">
    <source>
        <dbReference type="SAM" id="MobiDB-lite"/>
    </source>
</evidence>
<evidence type="ECO:0000269" key="4">
    <source>
    </source>
</evidence>
<evidence type="ECO:0000269" key="5">
    <source>
    </source>
</evidence>
<evidence type="ECO:0000303" key="6">
    <source>
    </source>
</evidence>
<evidence type="ECO:0000305" key="7"/>
<evidence type="ECO:0000312" key="8">
    <source>
        <dbReference type="HGNC" id="HGNC:14163"/>
    </source>
</evidence>
<reference key="1">
    <citation type="journal article" date="2001" name="Genome Res.">
        <title>Towards a catalog of human genes and proteins: sequencing and analysis of 500 novel complete protein coding human cDNAs.</title>
        <authorList>
            <person name="Wiemann S."/>
            <person name="Weil B."/>
            <person name="Wellenreuther R."/>
            <person name="Gassenhuber J."/>
            <person name="Glassl S."/>
            <person name="Ansorge W."/>
            <person name="Boecher M."/>
            <person name="Bloecker H."/>
            <person name="Bauersachs S."/>
            <person name="Blum H."/>
            <person name="Lauber J."/>
            <person name="Duesterhoeft A."/>
            <person name="Beyer A."/>
            <person name="Koehrer K."/>
            <person name="Strack N."/>
            <person name="Mewes H.-W."/>
            <person name="Ottenwaelder B."/>
            <person name="Obermaier B."/>
            <person name="Tampe J."/>
            <person name="Heubner D."/>
            <person name="Wambutt R."/>
            <person name="Korn B."/>
            <person name="Klein M."/>
            <person name="Poustka A."/>
        </authorList>
    </citation>
    <scope>NUCLEOTIDE SEQUENCE [LARGE SCALE MRNA] (ISOFORM 1)</scope>
    <source>
        <tissue>Amygdala</tissue>
    </source>
</reference>
<reference key="2">
    <citation type="journal article" date="2004" name="Nat. Genet.">
        <title>Complete sequencing and characterization of 21,243 full-length human cDNAs.</title>
        <authorList>
            <person name="Ota T."/>
            <person name="Suzuki Y."/>
            <person name="Nishikawa T."/>
            <person name="Otsuki T."/>
            <person name="Sugiyama T."/>
            <person name="Irie R."/>
            <person name="Wakamatsu A."/>
            <person name="Hayashi K."/>
            <person name="Sato H."/>
            <person name="Nagai K."/>
            <person name="Kimura K."/>
            <person name="Makita H."/>
            <person name="Sekine M."/>
            <person name="Obayashi M."/>
            <person name="Nishi T."/>
            <person name="Shibahara T."/>
            <person name="Tanaka T."/>
            <person name="Ishii S."/>
            <person name="Yamamoto J."/>
            <person name="Saito K."/>
            <person name="Kawai Y."/>
            <person name="Isono Y."/>
            <person name="Nakamura Y."/>
            <person name="Nagahari K."/>
            <person name="Murakami K."/>
            <person name="Yasuda T."/>
            <person name="Iwayanagi T."/>
            <person name="Wagatsuma M."/>
            <person name="Shiratori A."/>
            <person name="Sudo H."/>
            <person name="Hosoiri T."/>
            <person name="Kaku Y."/>
            <person name="Kodaira H."/>
            <person name="Kondo H."/>
            <person name="Sugawara M."/>
            <person name="Takahashi M."/>
            <person name="Kanda K."/>
            <person name="Yokoi T."/>
            <person name="Furuya T."/>
            <person name="Kikkawa E."/>
            <person name="Omura Y."/>
            <person name="Abe K."/>
            <person name="Kamihara K."/>
            <person name="Katsuta N."/>
            <person name="Sato K."/>
            <person name="Tanikawa M."/>
            <person name="Yamazaki M."/>
            <person name="Ninomiya K."/>
            <person name="Ishibashi T."/>
            <person name="Yamashita H."/>
            <person name="Murakawa K."/>
            <person name="Fujimori K."/>
            <person name="Tanai H."/>
            <person name="Kimata M."/>
            <person name="Watanabe M."/>
            <person name="Hiraoka S."/>
            <person name="Chiba Y."/>
            <person name="Ishida S."/>
            <person name="Ono Y."/>
            <person name="Takiguchi S."/>
            <person name="Watanabe S."/>
            <person name="Yosida M."/>
            <person name="Hotuta T."/>
            <person name="Kusano J."/>
            <person name="Kanehori K."/>
            <person name="Takahashi-Fujii A."/>
            <person name="Hara H."/>
            <person name="Tanase T.-O."/>
            <person name="Nomura Y."/>
            <person name="Togiya S."/>
            <person name="Komai F."/>
            <person name="Hara R."/>
            <person name="Takeuchi K."/>
            <person name="Arita M."/>
            <person name="Imose N."/>
            <person name="Musashino K."/>
            <person name="Yuuki H."/>
            <person name="Oshima A."/>
            <person name="Sasaki N."/>
            <person name="Aotsuka S."/>
            <person name="Yoshikawa Y."/>
            <person name="Matsunawa H."/>
            <person name="Ichihara T."/>
            <person name="Shiohata N."/>
            <person name="Sano S."/>
            <person name="Moriya S."/>
            <person name="Momiyama H."/>
            <person name="Satoh N."/>
            <person name="Takami S."/>
            <person name="Terashima Y."/>
            <person name="Suzuki O."/>
            <person name="Nakagawa S."/>
            <person name="Senoh A."/>
            <person name="Mizoguchi H."/>
            <person name="Goto Y."/>
            <person name="Shimizu F."/>
            <person name="Wakebe H."/>
            <person name="Hishigaki H."/>
            <person name="Watanabe T."/>
            <person name="Sugiyama A."/>
            <person name="Takemoto M."/>
            <person name="Kawakami B."/>
            <person name="Yamazaki M."/>
            <person name="Watanabe K."/>
            <person name="Kumagai A."/>
            <person name="Itakura S."/>
            <person name="Fukuzumi Y."/>
            <person name="Fujimori Y."/>
            <person name="Komiyama M."/>
            <person name="Tashiro H."/>
            <person name="Tanigami A."/>
            <person name="Fujiwara T."/>
            <person name="Ono T."/>
            <person name="Yamada K."/>
            <person name="Fujii Y."/>
            <person name="Ozaki K."/>
            <person name="Hirao M."/>
            <person name="Ohmori Y."/>
            <person name="Kawabata A."/>
            <person name="Hikiji T."/>
            <person name="Kobatake N."/>
            <person name="Inagaki H."/>
            <person name="Ikema Y."/>
            <person name="Okamoto S."/>
            <person name="Okitani R."/>
            <person name="Kawakami T."/>
            <person name="Noguchi S."/>
            <person name="Itoh T."/>
            <person name="Shigeta K."/>
            <person name="Senba T."/>
            <person name="Matsumura K."/>
            <person name="Nakajima Y."/>
            <person name="Mizuno T."/>
            <person name="Morinaga M."/>
            <person name="Sasaki M."/>
            <person name="Togashi T."/>
            <person name="Oyama M."/>
            <person name="Hata H."/>
            <person name="Watanabe M."/>
            <person name="Komatsu T."/>
            <person name="Mizushima-Sugano J."/>
            <person name="Satoh T."/>
            <person name="Shirai Y."/>
            <person name="Takahashi Y."/>
            <person name="Nakagawa K."/>
            <person name="Okumura K."/>
            <person name="Nagase T."/>
            <person name="Nomura N."/>
            <person name="Kikuchi H."/>
            <person name="Masuho Y."/>
            <person name="Yamashita R."/>
            <person name="Nakai K."/>
            <person name="Yada T."/>
            <person name="Nakamura Y."/>
            <person name="Ohara O."/>
            <person name="Isogai T."/>
            <person name="Sugano S."/>
        </authorList>
    </citation>
    <scope>NUCLEOTIDE SEQUENCE [LARGE SCALE MRNA] (ISOFORM 2)</scope>
    <source>
        <tissue>Stomach</tissue>
    </source>
</reference>
<reference key="3">
    <citation type="journal article" date="2001" name="Hum. Mol. Genet.">
        <title>Sequence, structure and pathology of the fully annotated terminal 2 Mb of the short arm of human chromosome 16.</title>
        <authorList>
            <person name="Daniels R.J."/>
            <person name="Peden J.F."/>
            <person name="Lloyd C."/>
            <person name="Horsley S.W."/>
            <person name="Clark K."/>
            <person name="Tufarelli C."/>
            <person name="Kearney L."/>
            <person name="Buckle V.J."/>
            <person name="Doggett N.A."/>
            <person name="Flint J."/>
            <person name="Higgs D.R."/>
        </authorList>
    </citation>
    <scope>NUCLEOTIDE SEQUENCE [LARGE SCALE GENOMIC DNA]</scope>
</reference>
<reference key="4">
    <citation type="submission" date="2005-09" db="EMBL/GenBank/DDBJ databases">
        <authorList>
            <person name="Mural R.J."/>
            <person name="Istrail S."/>
            <person name="Sutton G.G."/>
            <person name="Florea L."/>
            <person name="Halpern A.L."/>
            <person name="Mobarry C.M."/>
            <person name="Lippert R."/>
            <person name="Walenz B."/>
            <person name="Shatkay H."/>
            <person name="Dew I."/>
            <person name="Miller J.R."/>
            <person name="Flanigan M.J."/>
            <person name="Edwards N.J."/>
            <person name="Bolanos R."/>
            <person name="Fasulo D."/>
            <person name="Halldorsson B.V."/>
            <person name="Hannenhalli S."/>
            <person name="Turner R."/>
            <person name="Yooseph S."/>
            <person name="Lu F."/>
            <person name="Nusskern D.R."/>
            <person name="Shue B.C."/>
            <person name="Zheng X.H."/>
            <person name="Zhong F."/>
            <person name="Delcher A.L."/>
            <person name="Huson D.H."/>
            <person name="Kravitz S.A."/>
            <person name="Mouchard L."/>
            <person name="Reinert K."/>
            <person name="Remington K.A."/>
            <person name="Clark A.G."/>
            <person name="Waterman M.S."/>
            <person name="Eichler E.E."/>
            <person name="Adams M.D."/>
            <person name="Hunkapiller M.W."/>
            <person name="Myers E.W."/>
            <person name="Venter J.C."/>
        </authorList>
    </citation>
    <scope>NUCLEOTIDE SEQUENCE [LARGE SCALE GENOMIC DNA]</scope>
</reference>
<reference key="5">
    <citation type="journal article" date="2004" name="Genome Res.">
        <title>The status, quality, and expansion of the NIH full-length cDNA project: the Mammalian Gene Collection (MGC).</title>
        <authorList>
            <consortium name="The MGC Project Team"/>
        </authorList>
    </citation>
    <scope>NUCLEOTIDE SEQUENCE [LARGE SCALE MRNA] (ISOFORM 1)</scope>
    <source>
        <tissue>Colon</tissue>
        <tissue>Glioblastoma</tissue>
        <tissue>Ovary</tissue>
    </source>
</reference>
<reference key="6">
    <citation type="journal article" date="2009" name="J. Proteome Res.">
        <title>Glycoproteomics analysis of human liver tissue by combination of multiple enzyme digestion and hydrazide chemistry.</title>
        <authorList>
            <person name="Chen R."/>
            <person name="Jiang X."/>
            <person name="Sun D."/>
            <person name="Han G."/>
            <person name="Wang F."/>
            <person name="Ye M."/>
            <person name="Wang L."/>
            <person name="Zou H."/>
        </authorList>
    </citation>
    <scope>GLYCOSYLATION [LARGE SCALE ANALYSIS] AT ASN-389</scope>
    <source>
        <tissue>Liver</tissue>
    </source>
</reference>
<reference key="7">
    <citation type="journal article" date="2009" name="Nat. Biotechnol.">
        <title>Mass-spectrometric identification and relative quantification of N-linked cell surface glycoproteins.</title>
        <authorList>
            <person name="Wollscheid B."/>
            <person name="Bausch-Fluck D."/>
            <person name="Henderson C."/>
            <person name="O'Brien R."/>
            <person name="Bibel M."/>
            <person name="Schiess R."/>
            <person name="Aebersold R."/>
            <person name="Watts J.D."/>
        </authorList>
    </citation>
    <scope>GLYCOSYLATION [LARGE SCALE ANALYSIS] AT ASN-314; ASN-389 AND ASN-473</scope>
    <source>
        <tissue>Leukemic T-cell</tissue>
    </source>
</reference>
<comment type="subcellular location">
    <subcellularLocation>
        <location evidence="7">Membrane</location>
        <topology evidence="7">Single-pass type II membrane protein</topology>
    </subcellularLocation>
</comment>
<comment type="alternative products">
    <event type="alternative splicing"/>
    <isoform>
        <id>Q9H0X4-1</id>
        <name>1</name>
        <sequence type="displayed"/>
    </isoform>
    <isoform>
        <id>Q9H0X4-2</id>
        <name>2</name>
        <sequence type="described" ref="VSP_020121 VSP_020122"/>
    </isoform>
</comment>
<comment type="similarity">
    <text evidence="7">Belongs to the FAM234 family.</text>
</comment>
<comment type="sequence caution" evidence="7">
    <conflict type="erroneous gene model prediction">
        <sequence resource="EMBL-CDS" id="AAK61220"/>
    </conflict>
</comment>
<dbReference type="EMBL" id="AL136542">
    <property type="protein sequence ID" value="CAB66477.1"/>
    <property type="molecule type" value="mRNA"/>
</dbReference>
<dbReference type="EMBL" id="AK057165">
    <property type="protein sequence ID" value="BAB71374.1"/>
    <property type="molecule type" value="mRNA"/>
</dbReference>
<dbReference type="EMBL" id="AE006462">
    <property type="protein sequence ID" value="AAK61220.1"/>
    <property type="status" value="ALT_SEQ"/>
    <property type="molecule type" value="Genomic_DNA"/>
</dbReference>
<dbReference type="EMBL" id="CH471112">
    <property type="protein sequence ID" value="EAW85846.1"/>
    <property type="molecule type" value="Genomic_DNA"/>
</dbReference>
<dbReference type="EMBL" id="CH471112">
    <property type="protein sequence ID" value="EAW85847.1"/>
    <property type="molecule type" value="Genomic_DNA"/>
</dbReference>
<dbReference type="EMBL" id="BC010521">
    <property type="protein sequence ID" value="AAH10521.1"/>
    <property type="molecule type" value="mRNA"/>
</dbReference>
<dbReference type="EMBL" id="BC013047">
    <property type="protein sequence ID" value="AAH13047.1"/>
    <property type="molecule type" value="mRNA"/>
</dbReference>
<dbReference type="EMBL" id="BC032112">
    <property type="protein sequence ID" value="AAH32112.1"/>
    <property type="molecule type" value="mRNA"/>
</dbReference>
<dbReference type="CCDS" id="CCDS10402.1">
    <molecule id="Q9H0X4-1"/>
</dbReference>
<dbReference type="RefSeq" id="NP_001271426.1">
    <molecule id="Q9H0X4-1"/>
    <property type="nucleotide sequence ID" value="NM_001284497.2"/>
</dbReference>
<dbReference type="RefSeq" id="NP_114428.1">
    <molecule id="Q9H0X4-1"/>
    <property type="nucleotide sequence ID" value="NM_032039.4"/>
</dbReference>
<dbReference type="RefSeq" id="XP_005255679.1">
    <molecule id="Q9H0X4-1"/>
    <property type="nucleotide sequence ID" value="XM_005255622.2"/>
</dbReference>
<dbReference type="RefSeq" id="XP_011520993.1">
    <molecule id="Q9H0X4-1"/>
    <property type="nucleotide sequence ID" value="XM_011522691.2"/>
</dbReference>
<dbReference type="RefSeq" id="XP_011520994.1">
    <molecule id="Q9H0X4-1"/>
    <property type="nucleotide sequence ID" value="XM_011522692.2"/>
</dbReference>
<dbReference type="RefSeq" id="XP_016879249.1">
    <molecule id="Q9H0X4-1"/>
    <property type="nucleotide sequence ID" value="XM_017023760.3"/>
</dbReference>
<dbReference type="RefSeq" id="XP_016879250.1">
    <molecule id="Q9H0X4-1"/>
    <property type="nucleotide sequence ID" value="XM_017023761.2"/>
</dbReference>
<dbReference type="RefSeq" id="XP_016879251.1">
    <molecule id="Q9H0X4-1"/>
    <property type="nucleotide sequence ID" value="XM_017023762.2"/>
</dbReference>
<dbReference type="RefSeq" id="XP_047290698.1">
    <molecule id="Q9H0X4-1"/>
    <property type="nucleotide sequence ID" value="XM_047434742.1"/>
</dbReference>
<dbReference type="RefSeq" id="XP_047290699.1">
    <molecule id="Q9H0X4-1"/>
    <property type="nucleotide sequence ID" value="XM_047434743.1"/>
</dbReference>
<dbReference type="RefSeq" id="XP_047290700.1">
    <molecule id="Q9H0X4-1"/>
    <property type="nucleotide sequence ID" value="XM_047434744.1"/>
</dbReference>
<dbReference type="RefSeq" id="XP_047290701.1">
    <molecule id="Q9H0X4-1"/>
    <property type="nucleotide sequence ID" value="XM_047434745.1"/>
</dbReference>
<dbReference type="RefSeq" id="XP_047290702.1">
    <molecule id="Q9H0X4-1"/>
    <property type="nucleotide sequence ID" value="XM_047434746.1"/>
</dbReference>
<dbReference type="RefSeq" id="XP_054170088.1">
    <molecule id="Q9H0X4-1"/>
    <property type="nucleotide sequence ID" value="XM_054314113.1"/>
</dbReference>
<dbReference type="RefSeq" id="XP_054170089.1">
    <molecule id="Q9H0X4-1"/>
    <property type="nucleotide sequence ID" value="XM_054314114.1"/>
</dbReference>
<dbReference type="RefSeq" id="XP_054170090.1">
    <molecule id="Q9H0X4-1"/>
    <property type="nucleotide sequence ID" value="XM_054314115.1"/>
</dbReference>
<dbReference type="RefSeq" id="XP_054170091.1">
    <molecule id="Q9H0X4-1"/>
    <property type="nucleotide sequence ID" value="XM_054314116.1"/>
</dbReference>
<dbReference type="RefSeq" id="XP_054170092.1">
    <molecule id="Q9H0X4-1"/>
    <property type="nucleotide sequence ID" value="XM_054314117.1"/>
</dbReference>
<dbReference type="RefSeq" id="XP_054170093.1">
    <molecule id="Q9H0X4-1"/>
    <property type="nucleotide sequence ID" value="XM_054314118.1"/>
</dbReference>
<dbReference type="RefSeq" id="XP_054170094.1">
    <molecule id="Q9H0X4-1"/>
    <property type="nucleotide sequence ID" value="XM_054314119.1"/>
</dbReference>
<dbReference type="RefSeq" id="XP_054170095.1">
    <molecule id="Q9H0X4-1"/>
    <property type="nucleotide sequence ID" value="XM_054314120.1"/>
</dbReference>
<dbReference type="RefSeq" id="XP_054170096.1">
    <molecule id="Q9H0X4-1"/>
    <property type="nucleotide sequence ID" value="XM_054314121.1"/>
</dbReference>
<dbReference type="RefSeq" id="XP_054170097.1">
    <molecule id="Q9H0X4-1"/>
    <property type="nucleotide sequence ID" value="XM_054314122.1"/>
</dbReference>
<dbReference type="RefSeq" id="XP_054170098.1">
    <molecule id="Q9H0X4-1"/>
    <property type="nucleotide sequence ID" value="XM_054314123.1"/>
</dbReference>
<dbReference type="BioGRID" id="123837">
    <property type="interactions" value="359"/>
</dbReference>
<dbReference type="FunCoup" id="Q9H0X4">
    <property type="interactions" value="273"/>
</dbReference>
<dbReference type="IntAct" id="Q9H0X4">
    <property type="interactions" value="123"/>
</dbReference>
<dbReference type="MINT" id="Q9H0X4"/>
<dbReference type="STRING" id="9606.ENSP00000382814"/>
<dbReference type="GlyConnect" id="1662">
    <property type="glycosylation" value="1 N-Linked glycan (1 site)"/>
</dbReference>
<dbReference type="GlyCosmos" id="Q9H0X4">
    <property type="glycosylation" value="6 sites, 2 glycans"/>
</dbReference>
<dbReference type="GlyGen" id="Q9H0X4">
    <property type="glycosylation" value="7 sites, 18 N-linked glycans (5 sites), 1 O-linked glycan (2 sites)"/>
</dbReference>
<dbReference type="iPTMnet" id="Q9H0X4"/>
<dbReference type="PhosphoSitePlus" id="Q9H0X4"/>
<dbReference type="SwissPalm" id="Q9H0X4"/>
<dbReference type="BioMuta" id="FAM234A"/>
<dbReference type="DMDM" id="74733531"/>
<dbReference type="jPOST" id="Q9H0X4"/>
<dbReference type="MassIVE" id="Q9H0X4"/>
<dbReference type="PaxDb" id="9606-ENSP00000382814"/>
<dbReference type="PeptideAtlas" id="Q9H0X4"/>
<dbReference type="ProteomicsDB" id="80339">
    <molecule id="Q9H0X4-1"/>
</dbReference>
<dbReference type="ProteomicsDB" id="80340">
    <molecule id="Q9H0X4-2"/>
</dbReference>
<dbReference type="Pumba" id="Q9H0X4"/>
<dbReference type="Antibodypedia" id="2603">
    <property type="antibodies" value="145 antibodies from 22 providers"/>
</dbReference>
<dbReference type="DNASU" id="83986"/>
<dbReference type="Ensembl" id="ENST00000301678.7">
    <molecule id="Q9H0X4-1"/>
    <property type="protein sequence ID" value="ENSP00000301678.3"/>
    <property type="gene ID" value="ENSG00000167930.17"/>
</dbReference>
<dbReference type="Ensembl" id="ENST00000301679.7">
    <molecule id="Q9H0X4-2"/>
    <property type="protein sequence ID" value="ENSP00000301679.2"/>
    <property type="gene ID" value="ENSG00000167930.17"/>
</dbReference>
<dbReference type="Ensembl" id="ENST00000399932.8">
    <molecule id="Q9H0X4-1"/>
    <property type="protein sequence ID" value="ENSP00000382814.3"/>
    <property type="gene ID" value="ENSG00000167930.17"/>
</dbReference>
<dbReference type="Ensembl" id="ENST00000654053.1">
    <molecule id="Q9H0X4-2"/>
    <property type="protein sequence ID" value="ENSP00000499447.1"/>
    <property type="gene ID" value="ENSG00000167930.17"/>
</dbReference>
<dbReference type="Ensembl" id="ENST00000659283.1">
    <molecule id="Q9H0X4-2"/>
    <property type="protein sequence ID" value="ENSP00000499694.1"/>
    <property type="gene ID" value="ENSG00000167930.17"/>
</dbReference>
<dbReference type="Ensembl" id="ENST00000666018.1">
    <molecule id="Q9H0X4-2"/>
    <property type="protein sequence ID" value="ENSP00000499687.1"/>
    <property type="gene ID" value="ENSG00000167930.17"/>
</dbReference>
<dbReference type="GeneID" id="83986"/>
<dbReference type="KEGG" id="hsa:83986"/>
<dbReference type="MANE-Select" id="ENST00000399932.8">
    <property type="protein sequence ID" value="ENSP00000382814.3"/>
    <property type="RefSeq nucleotide sequence ID" value="NM_032039.4"/>
    <property type="RefSeq protein sequence ID" value="NP_114428.1"/>
</dbReference>
<dbReference type="UCSC" id="uc002cgf.4">
    <molecule id="Q9H0X4-1"/>
    <property type="organism name" value="human"/>
</dbReference>
<dbReference type="AGR" id="HGNC:14163"/>
<dbReference type="CTD" id="83986"/>
<dbReference type="DisGeNET" id="83986"/>
<dbReference type="GeneCards" id="FAM234A"/>
<dbReference type="HGNC" id="HGNC:14163">
    <property type="gene designation" value="FAM234A"/>
</dbReference>
<dbReference type="HPA" id="ENSG00000167930">
    <property type="expression patterns" value="Low tissue specificity"/>
</dbReference>
<dbReference type="neXtProt" id="NX_Q9H0X4"/>
<dbReference type="OpenTargets" id="ENSG00000167930"/>
<dbReference type="PharmGKB" id="PA25564"/>
<dbReference type="VEuPathDB" id="HostDB:ENSG00000167930"/>
<dbReference type="eggNOG" id="ENOG502R0CE">
    <property type="taxonomic scope" value="Eukaryota"/>
</dbReference>
<dbReference type="GeneTree" id="ENSGT00530000063694"/>
<dbReference type="HOGENOM" id="CLU_036490_0_0_1"/>
<dbReference type="InParanoid" id="Q9H0X4"/>
<dbReference type="OMA" id="FMFWGLM"/>
<dbReference type="OrthoDB" id="6364780at2759"/>
<dbReference type="PAN-GO" id="Q9H0X4">
    <property type="GO annotations" value="1 GO annotation based on evolutionary models"/>
</dbReference>
<dbReference type="PhylomeDB" id="Q9H0X4"/>
<dbReference type="TreeFam" id="TF327203"/>
<dbReference type="PathwayCommons" id="Q9H0X4"/>
<dbReference type="SignaLink" id="Q9H0X4"/>
<dbReference type="BioGRID-ORCS" id="83986">
    <property type="hits" value="12 hits in 1136 CRISPR screens"/>
</dbReference>
<dbReference type="ChiTaRS" id="FAM234A">
    <property type="organism name" value="human"/>
</dbReference>
<dbReference type="GeneWiki" id="ITFG3"/>
<dbReference type="GenomeRNAi" id="83986"/>
<dbReference type="Pharos" id="Q9H0X4">
    <property type="development level" value="Tbio"/>
</dbReference>
<dbReference type="PRO" id="PR:Q9H0X4"/>
<dbReference type="Proteomes" id="UP000005640">
    <property type="component" value="Chromosome 16"/>
</dbReference>
<dbReference type="RNAct" id="Q9H0X4">
    <property type="molecule type" value="protein"/>
</dbReference>
<dbReference type="Bgee" id="ENSG00000167930">
    <property type="expression patterns" value="Expressed in apex of heart and 170 other cell types or tissues"/>
</dbReference>
<dbReference type="ExpressionAtlas" id="Q9H0X4">
    <property type="expression patterns" value="baseline and differential"/>
</dbReference>
<dbReference type="GO" id="GO:0009986">
    <property type="term" value="C:cell surface"/>
    <property type="evidence" value="ECO:0000314"/>
    <property type="project" value="UniProtKB"/>
</dbReference>
<dbReference type="GO" id="GO:0070062">
    <property type="term" value="C:extracellular exosome"/>
    <property type="evidence" value="ECO:0007005"/>
    <property type="project" value="UniProtKB"/>
</dbReference>
<dbReference type="GO" id="GO:0016020">
    <property type="term" value="C:membrane"/>
    <property type="evidence" value="ECO:0007669"/>
    <property type="project" value="UniProtKB-SubCell"/>
</dbReference>
<dbReference type="FunFam" id="2.130.10.10:FF:002632">
    <property type="entry name" value="Protein FAM234A"/>
    <property type="match status" value="1"/>
</dbReference>
<dbReference type="InterPro" id="IPR045232">
    <property type="entry name" value="FAM234"/>
</dbReference>
<dbReference type="InterPro" id="IPR055409">
    <property type="entry name" value="FAM234A_B_beta-prop"/>
</dbReference>
<dbReference type="InterPro" id="IPR011047">
    <property type="entry name" value="Quinoprotein_ADH-like_sf"/>
</dbReference>
<dbReference type="PANTHER" id="PTHR21419">
    <property type="match status" value="1"/>
</dbReference>
<dbReference type="PANTHER" id="PTHR21419:SF7">
    <property type="entry name" value="PROTEIN FAM234A"/>
    <property type="match status" value="1"/>
</dbReference>
<dbReference type="Pfam" id="PF23727">
    <property type="entry name" value="Beta-prop_FAM234A_B"/>
    <property type="match status" value="1"/>
</dbReference>
<dbReference type="SUPFAM" id="SSF50998">
    <property type="entry name" value="Quinoprotein alcohol dehydrogenase-like"/>
    <property type="match status" value="1"/>
</dbReference>
<sequence>MLDHKDLEAEIHPLKNEERKSQENLGNPSKNEDNVKSAPPQSRLSRCRAAAFFLSLFLCLFVVFVVSFVIPCPDRPASQRMWRIDYSAAVIYDFLAVDDINGDRIQDVLFLYKNTNSSNNFSRSCVDEGFSSPCTFAAAVSGANGSTLWERPVAQDVALVECAVPQPRGSEAPSACILVGRPSSFIAVNLFTGETLWNHSSSFSGNASILSPLLQVPDVDGDGAPDLLVLTQEREEVSGHLYSGSTGHQIGLRGSLGVDGESGFLLHVTRTGAHYILFPCASSLCGCSVKGLYEKVTGSGGPFKSDPHWESMLNATTRRMLSHSSGAVRYLMHVPGNAGADVLLVGSEAFVLLDGQELTPRWTPKAAHVLRKPIFGRYKPDTLAVAVENGTGTDRQILFLDLGTGAVLCSLALPSLPGGPLSASLPTADHRSAFFFWGLHELGSTSETETGEARHSLYMFHPTLPRVLLELANVSTHIVAFDAVLFEPSRHAAYILLTGPADSEAPGLVSVIKHKVRDLVPSSRVVRLGEGGPDSDQAIRDRFSRLRYQSEA</sequence>
<name>F234A_HUMAN</name>
<feature type="chain" id="PRO_0000247993" description="Protein FAM234A">
    <location>
        <begin position="1"/>
        <end position="552"/>
    </location>
</feature>
<feature type="topological domain" description="Cytoplasmic" evidence="2">
    <location>
        <begin position="1"/>
        <end position="49"/>
    </location>
</feature>
<feature type="transmembrane region" description="Helical; Signal-anchor for type II membrane protein" evidence="2">
    <location>
        <begin position="50"/>
        <end position="70"/>
    </location>
</feature>
<feature type="topological domain" description="Extracellular" evidence="2">
    <location>
        <begin position="71"/>
        <end position="552"/>
    </location>
</feature>
<feature type="region of interest" description="Disordered" evidence="3">
    <location>
        <begin position="1"/>
        <end position="40"/>
    </location>
</feature>
<feature type="compositionally biased region" description="Basic and acidic residues" evidence="3">
    <location>
        <begin position="1"/>
        <end position="22"/>
    </location>
</feature>
<feature type="modified residue" description="Phosphoserine" evidence="1">
    <location>
        <position position="21"/>
    </location>
</feature>
<feature type="glycosylation site" description="N-linked (GlcNAc...) asparagine" evidence="2">
    <location>
        <position position="116"/>
    </location>
</feature>
<feature type="glycosylation site" description="N-linked (GlcNAc...) asparagine" evidence="5">
    <location>
        <position position="314"/>
    </location>
</feature>
<feature type="glycosylation site" description="N-linked (GlcNAc...) asparagine" evidence="4 5">
    <location>
        <position position="389"/>
    </location>
</feature>
<feature type="glycosylation site" description="N-linked (GlcNAc...) asparagine" evidence="5">
    <location>
        <position position="473"/>
    </location>
</feature>
<feature type="splice variant" id="VSP_020121" description="In isoform 2." evidence="6">
    <original>VRDLVPSSRVVRLGEGGPDSDQAIR</original>
    <variation>AHTGRQRRGSWTGQSSRRDLHVRVL</variation>
    <location>
        <begin position="516"/>
        <end position="540"/>
    </location>
</feature>
<feature type="splice variant" id="VSP_020122" description="In isoform 2." evidence="6">
    <location>
        <begin position="541"/>
        <end position="552"/>
    </location>
</feature>
<feature type="sequence conflict" description="In Ref. 2; BAB71374." evidence="7" ref="2">
    <original>K</original>
    <variation>E</variation>
    <location>
        <position position="20"/>
    </location>
</feature>
<gene>
    <name evidence="8" type="primary">FAM234A</name>
    <name type="synonym">C16orf9</name>
    <name type="synonym">ITFG3</name>
</gene>
<keyword id="KW-0025">Alternative splicing</keyword>
<keyword id="KW-0325">Glycoprotein</keyword>
<keyword id="KW-0472">Membrane</keyword>
<keyword id="KW-0597">Phosphoprotein</keyword>
<keyword id="KW-1267">Proteomics identification</keyword>
<keyword id="KW-1185">Reference proteome</keyword>
<keyword id="KW-0735">Signal-anchor</keyword>
<keyword id="KW-0812">Transmembrane</keyword>
<keyword id="KW-1133">Transmembrane helix</keyword>
<accession>Q9H0X4</accession>
<accession>D3DU45</accession>
<accession>Q7L416</accession>
<accession>Q96FR1</accession>
<accession>Q96MC7</accession>
<accession>Q96S30</accession>
<proteinExistence type="evidence at protein level"/>
<organism>
    <name type="scientific">Homo sapiens</name>
    <name type="common">Human</name>
    <dbReference type="NCBI Taxonomy" id="9606"/>
    <lineage>
        <taxon>Eukaryota</taxon>
        <taxon>Metazoa</taxon>
        <taxon>Chordata</taxon>
        <taxon>Craniata</taxon>
        <taxon>Vertebrata</taxon>
        <taxon>Euteleostomi</taxon>
        <taxon>Mammalia</taxon>
        <taxon>Eutheria</taxon>
        <taxon>Euarchontoglires</taxon>
        <taxon>Primates</taxon>
        <taxon>Haplorrhini</taxon>
        <taxon>Catarrhini</taxon>
        <taxon>Hominidae</taxon>
        <taxon>Homo</taxon>
    </lineage>
</organism>